<comment type="function">
    <text evidence="2 4 5">May participate in a complex which severs microtubules in an ATP-dependent manner (By similarity). Microtubule severing may promote rapid reorganization of cellular microtubule arrays (By similarity). Confers precision to microtubule (MT) severing by specific targeting of KTN1 to MT cleavage sites such as crossover or branching nucleation sites (PubMed:28978669). Together with other KTN80s, regulates cell elongation by modulating MT organization (PubMed:28978669). Negative regulator of abscisic acid (ABA) responses (PubMed:21421380). May function as a substrate receptor for cullin-RING ubiquitin ligase 4 complexes (CRL4), a family of E3 ligases involved in protein degradation (PubMed:21421380).</text>
</comment>
<comment type="subunit">
    <text evidence="4 5">Component of KTN80-KTN1 complexes composed of a hexamer of KTN1-KTN80 heterodimers that sense microtubule (MT) geometry to confer precise MT severing (PubMed:28978669). Interacts directly with AAA1/KTN1 (PubMed:28978669). Interacts with subunits of the CUL4-based E3 ligase complex DDB1A and DDB1B (PubMed:21421380).</text>
</comment>
<comment type="interaction">
    <interactant intactId="EBI-2025609">
        <id>F4HTH8</id>
    </interactant>
    <interactant intactId="EBI-2025583">
        <id>Q9SEX2</id>
        <label>AAA1</label>
    </interactant>
    <organismsDiffer>false</organismsDiffer>
    <experiments>3</experiments>
</comment>
<comment type="subcellular location">
    <subcellularLocation>
        <location evidence="2 5">Cytoplasm</location>
        <location evidence="2 5">Cytoskeleton</location>
    </subcellularLocation>
    <text evidence="5">Present in dynamic discrete particles specifically localized to microtubule (MT) crossovers and branching nucleation sites.</text>
</comment>
<comment type="alternative products">
    <event type="alternative splicing"/>
    <isoform>
        <id>F4HTH8-1</id>
        <name>1</name>
        <sequence type="displayed"/>
    </isoform>
    <isoform>
        <id>F4HTH8-2</id>
        <name>2</name>
        <sequence type="described" ref="VSP_060684"/>
    </isoform>
    <isoform>
        <id>F4HTH8-3</id>
        <name>3</name>
        <sequence type="described" ref="VSP_060684 VSP_060685"/>
    </isoform>
</comment>
<comment type="tissue specificity">
    <text evidence="5">Expressed at low levels in siliques, flowers, leaves, stems and roots.</text>
</comment>
<comment type="disruption phenotype">
    <text evidence="4 5">Hyper-induction of abscisic acid (ABA)-inducible transcription factors (e.g. ABI5 and MYC2) and their downstream genes in response to ABA (PubMed:21421380). Increased sensitivity to ABA and salt stress leading to reduced root length and increased dehydration tolerance (PubMed:21421380). The double mutant ktn80.1 ktn80.2 exhibits normal growth, but the quadruple mutant ktn80.1 ktn80.2 ktn80.3 ktn80.4 has a severe dwarf phenotype, with small and round dark-green rosette leaves as well as wide and short petioles, probably due to cell elongation defects, and associated with a complex cortical microtubule (MT) network with stable entanglements (PubMed:28978669). Plants missing KTN80s have a disruption of KTN1 recruitment at MT crossover or branching nucleation sites, leading to an abolishment of MT severing (PubMed:28978669).</text>
</comment>
<comment type="similarity">
    <text evidence="2">Belongs to the WD repeat KATNB1 family.</text>
</comment>
<comment type="sequence caution" evidence="8">
    <conflict type="erroneous gene model prediction">
        <sequence resource="EMBL-CDS" id="AAB71474"/>
    </conflict>
</comment>
<sequence>MAKRGYKLQEFLAHSANVNCLSIGKKTSRLFITGGDDYKVNLWAIGKPTSLMSLCGHTSAVDSVAFDSAEVLVLAGASSGVIKLWDVEEAKMVRAFTGHRSNCSAVEFHPFGEFLASGSSDANLKIWDIRKKGCIQTYKGHSRGISTIRFTPDGRWVVSGGLDNVVKVWDLTAGKLLHEFKFHEGPIRSLDFHPLEFLLATGSADRTVKFWDLETFELIGSTRPEATGVRSIKFHPDGRTLFCGLDDSLKVYSWEPVVCHDGVDMGWSTLGDLCISEGKLLGCSYYQNSVGIWVSDISQIEPYGIGSADKKECVEKILSALDDQSFDRIKSTPRRSSSPDYETKEIKNIYIDSTGGNSAVAHKSGSLSTPATSTGQAGDNKSLVVHSVVPRDSDIGKDSSDSGKESITFSKTKPGMLLRPAYVRKTPTKFDETKKQSVAVGYLKKSGLDGEKKLDTETAFDSEMSGRNPYDADDSIIKSITNKFEQALLPESPTDEAKCMLLKPPRVQRSPSTKYNEARWATSTDSGALDSKKNGLESSRDMDLPTGLRDDRGSNPCEEDIENKSISSRSERVLSPEKAGDELKSLESPGGSKESKSVKVVRGVKVVSGRTRSLVERFERGEKITHSEDKAASATVVHSSNSVEEEPLTASVQTVSMMPTQVMPVKLDQATNSTTVDVPVLSTRRTKSTPVRVMPVVLGRDTSMATDTPPVTSTRPDRTSATNLTSDVSGVTSKRQTRTSPAPVMPMILNQTTKMKSDEPSITSTWPDRTSATDLTSDVSGVISSRQTRTSPAPVMPMKLNQKTKIKSDEPPITSTRPDRPSATNLTSDESPVTSTRQAKTSPAPVTPVILNQRQTTNMKSDEPPVISTRPLRTSSARVMPVILNQASTTYDERPLSSSRSARTSPARIMPMKLNQADNMPSYEPPVALTRSARNSPARVIPVKLNQATNVTADASHIRSRQRFSPTQTLATPAVFDQVTDMTLDETTKTQQSSDILTQKEEPQISGREDDGDIWEILMRTHSEVLNTLQSRLTKLQIVRHFWERSDIKGAIAALRKLSDHSVQADVINILTDKTEILTLDLFSQLAPVLTGLLGSKTERPVNVSLEMLLKLVAVFGTVIQSTVSARRVVGVDLHAEERLQICQSCSAELQKVQKILPLLTRRGGLIARKAQELNLVLQTP</sequence>
<protein>
    <recommendedName>
        <fullName evidence="2 7">Katanin p80 WD40 repeat-containing subunit B1 homolog KTN80.2</fullName>
    </recommendedName>
    <alternativeName>
        <fullName evidence="6">DDB1 binding WD40 hypersensitive to ABA 3</fullName>
        <shortName evidence="6">DWD hypersensitive to ABA 3</shortName>
    </alternativeName>
</protein>
<organism>
    <name type="scientific">Arabidopsis thaliana</name>
    <name type="common">Mouse-ear cress</name>
    <dbReference type="NCBI Taxonomy" id="3702"/>
    <lineage>
        <taxon>Eukaryota</taxon>
        <taxon>Viridiplantae</taxon>
        <taxon>Streptophyta</taxon>
        <taxon>Embryophyta</taxon>
        <taxon>Tracheophyta</taxon>
        <taxon>Spermatophyta</taxon>
        <taxon>Magnoliopsida</taxon>
        <taxon>eudicotyledons</taxon>
        <taxon>Gunneridae</taxon>
        <taxon>Pentapetalae</taxon>
        <taxon>rosids</taxon>
        <taxon>malvids</taxon>
        <taxon>Brassicales</taxon>
        <taxon>Brassicaceae</taxon>
        <taxon>Camelineae</taxon>
        <taxon>Arabidopsis</taxon>
    </lineage>
</organism>
<accession>F4HTH8</accession>
<accession>A0A1P8AV57</accession>
<accession>F4HTH9</accession>
<accession>O22725</accession>
<gene>
    <name evidence="7" type="primary">KTN80.2</name>
    <name evidence="6" type="synonym">DWA3</name>
    <name evidence="10" type="ordered locus">At1g61210</name>
    <name evidence="11" type="ORF">F11P17.7</name>
</gene>
<name>KTN82_ARATH</name>
<reference key="1">
    <citation type="journal article" date="2000" name="Nature">
        <title>Sequence and analysis of chromosome 1 of the plant Arabidopsis thaliana.</title>
        <authorList>
            <person name="Theologis A."/>
            <person name="Ecker J.R."/>
            <person name="Palm C.J."/>
            <person name="Federspiel N.A."/>
            <person name="Kaul S."/>
            <person name="White O."/>
            <person name="Alonso J."/>
            <person name="Altafi H."/>
            <person name="Araujo R."/>
            <person name="Bowman C.L."/>
            <person name="Brooks S.Y."/>
            <person name="Buehler E."/>
            <person name="Chan A."/>
            <person name="Chao Q."/>
            <person name="Chen H."/>
            <person name="Cheuk R.F."/>
            <person name="Chin C.W."/>
            <person name="Chung M.K."/>
            <person name="Conn L."/>
            <person name="Conway A.B."/>
            <person name="Conway A.R."/>
            <person name="Creasy T.H."/>
            <person name="Dewar K."/>
            <person name="Dunn P."/>
            <person name="Etgu P."/>
            <person name="Feldblyum T.V."/>
            <person name="Feng J.-D."/>
            <person name="Fong B."/>
            <person name="Fujii C.Y."/>
            <person name="Gill J.E."/>
            <person name="Goldsmith A.D."/>
            <person name="Haas B."/>
            <person name="Hansen N.F."/>
            <person name="Hughes B."/>
            <person name="Huizar L."/>
            <person name="Hunter J.L."/>
            <person name="Jenkins J."/>
            <person name="Johnson-Hopson C."/>
            <person name="Khan S."/>
            <person name="Khaykin E."/>
            <person name="Kim C.J."/>
            <person name="Koo H.L."/>
            <person name="Kremenetskaia I."/>
            <person name="Kurtz D.B."/>
            <person name="Kwan A."/>
            <person name="Lam B."/>
            <person name="Langin-Hooper S."/>
            <person name="Lee A."/>
            <person name="Lee J.M."/>
            <person name="Lenz C.A."/>
            <person name="Li J.H."/>
            <person name="Li Y.-P."/>
            <person name="Lin X."/>
            <person name="Liu S.X."/>
            <person name="Liu Z.A."/>
            <person name="Luros J.S."/>
            <person name="Maiti R."/>
            <person name="Marziali A."/>
            <person name="Militscher J."/>
            <person name="Miranda M."/>
            <person name="Nguyen M."/>
            <person name="Nierman W.C."/>
            <person name="Osborne B.I."/>
            <person name="Pai G."/>
            <person name="Peterson J."/>
            <person name="Pham P.K."/>
            <person name="Rizzo M."/>
            <person name="Rooney T."/>
            <person name="Rowley D."/>
            <person name="Sakano H."/>
            <person name="Salzberg S.L."/>
            <person name="Schwartz J.R."/>
            <person name="Shinn P."/>
            <person name="Southwick A.M."/>
            <person name="Sun H."/>
            <person name="Tallon L.J."/>
            <person name="Tambunga G."/>
            <person name="Toriumi M.J."/>
            <person name="Town C.D."/>
            <person name="Utterback T."/>
            <person name="Van Aken S."/>
            <person name="Vaysberg M."/>
            <person name="Vysotskaia V.S."/>
            <person name="Walker M."/>
            <person name="Wu D."/>
            <person name="Yu G."/>
            <person name="Fraser C.M."/>
            <person name="Venter J.C."/>
            <person name="Davis R.W."/>
        </authorList>
    </citation>
    <scope>NUCLEOTIDE SEQUENCE [LARGE SCALE GENOMIC DNA]</scope>
    <source>
        <strain>cv. Columbia</strain>
    </source>
</reference>
<reference key="2">
    <citation type="journal article" date="2017" name="Plant J.">
        <title>Araport11: a complete reannotation of the Arabidopsis thaliana reference genome.</title>
        <authorList>
            <person name="Cheng C.Y."/>
            <person name="Krishnakumar V."/>
            <person name="Chan A.P."/>
            <person name="Thibaud-Nissen F."/>
            <person name="Schobel S."/>
            <person name="Town C.D."/>
        </authorList>
    </citation>
    <scope>GENOME REANNOTATION</scope>
    <source>
        <strain>cv. Columbia</strain>
    </source>
</reference>
<reference key="3">
    <citation type="journal article" date="2008" name="Plant Cell">
        <title>Characterization of Arabidopsis and rice DWD proteins and their roles as substrate receptors for CUL4-RING E3 ubiquitin ligases.</title>
        <authorList>
            <person name="Lee J.H."/>
            <person name="Terzaghi W."/>
            <person name="Gusmaroli G."/>
            <person name="Charron J.B."/>
            <person name="Yoon H.J."/>
            <person name="Chen H."/>
            <person name="He Y.J."/>
            <person name="Xiong Y."/>
            <person name="Deng X.W."/>
        </authorList>
    </citation>
    <scope>DWD MOTIF</scope>
</reference>
<reference key="4">
    <citation type="journal article" date="2008" name="Plant Cell">
        <title>Arabidopsis DDB1-CUL4 ASSOCIATED FACTOR1 forms a nuclear E3 ubiquitin ligase with DDB1 and CUL4 that is involved in multiple plant developmental processes.</title>
        <authorList>
            <person name="Zhang Y."/>
            <person name="Feng S."/>
            <person name="Chen F."/>
            <person name="Chen H."/>
            <person name="Wang J."/>
            <person name="McCall C."/>
            <person name="Xiong Y."/>
            <person name="Deng X.W."/>
        </authorList>
    </citation>
    <scope>GENE FAMILY</scope>
</reference>
<reference key="5">
    <citation type="journal article" date="2011" name="Plant Sci.">
        <title>DWA3, an Arabidopsis DWD protein, acts as a negative regulator in ABA signal transduction.</title>
        <authorList>
            <person name="Lee J.-H."/>
            <person name="Terzaghi W."/>
            <person name="Deng X.W."/>
        </authorList>
    </citation>
    <scope>FUNCTION</scope>
    <scope>DISRUPTION PHENOTYPE</scope>
    <scope>INTERACTION WITH DDB1A AND DDB1B</scope>
    <source>
        <strain>cv. Columbia</strain>
    </source>
</reference>
<reference key="6">
    <citation type="journal article" date="2017" name="EMBO J.">
        <title>KTN80 confers precision to microtubule severing by specific targeting of katanin complexes in plant cells.</title>
        <authorList>
            <person name="Wang C."/>
            <person name="Liu W."/>
            <person name="Wang G."/>
            <person name="Li J."/>
            <person name="Dong L."/>
            <person name="Han L."/>
            <person name="Wang Q."/>
            <person name="Tian J."/>
            <person name="Yu Y."/>
            <person name="Gao C."/>
            <person name="Kong Z."/>
        </authorList>
    </citation>
    <scope>FUNCTION</scope>
    <scope>DISRUPTION PHENOTYPE</scope>
    <scope>SUBCELLULAR LOCATION</scope>
    <scope>TISSUE SPECIFICITY</scope>
    <scope>SUBUNIT</scope>
    <scope>INTERACTION WITH AAA1/KTN1</scope>
    <scope>GENE FAMILY</scope>
    <scope>NOMENCLATURE</scope>
    <source>
        <strain>cv. Columbia</strain>
    </source>
</reference>
<dbReference type="EMBL" id="AC002294">
    <property type="protein sequence ID" value="AAB71474.1"/>
    <property type="status" value="ALT_SEQ"/>
    <property type="molecule type" value="Genomic_DNA"/>
</dbReference>
<dbReference type="EMBL" id="CP002684">
    <property type="protein sequence ID" value="AEE33803.1"/>
    <property type="molecule type" value="Genomic_DNA"/>
</dbReference>
<dbReference type="EMBL" id="CP002684">
    <property type="protein sequence ID" value="AEE33804.1"/>
    <property type="molecule type" value="Genomic_DNA"/>
</dbReference>
<dbReference type="EMBL" id="CP002684">
    <property type="protein sequence ID" value="ANM60526.1"/>
    <property type="molecule type" value="Genomic_DNA"/>
</dbReference>
<dbReference type="PIR" id="A96638">
    <property type="entry name" value="A96638"/>
</dbReference>
<dbReference type="RefSeq" id="NP_001185277.1">
    <molecule id="F4HTH8-2"/>
    <property type="nucleotide sequence ID" value="NM_001198348.2"/>
</dbReference>
<dbReference type="RefSeq" id="NP_001322807.1">
    <molecule id="F4HTH8-3"/>
    <property type="nucleotide sequence ID" value="NM_001333941.1"/>
</dbReference>
<dbReference type="RefSeq" id="NP_176316.4">
    <molecule id="F4HTH8-1"/>
    <property type="nucleotide sequence ID" value="NM_104802.5"/>
</dbReference>
<dbReference type="SMR" id="F4HTH8"/>
<dbReference type="FunCoup" id="F4HTH8">
    <property type="interactions" value="1267"/>
</dbReference>
<dbReference type="IntAct" id="F4HTH8">
    <property type="interactions" value="1"/>
</dbReference>
<dbReference type="STRING" id="3702.F4HTH8"/>
<dbReference type="GlyGen" id="F4HTH8">
    <property type="glycosylation" value="2 sites"/>
</dbReference>
<dbReference type="iPTMnet" id="F4HTH8"/>
<dbReference type="PaxDb" id="3702-AT1G61210.1"/>
<dbReference type="ProteomicsDB" id="205565"/>
<dbReference type="ProteomicsDB" id="209683">
    <molecule id="F4HTH8-1"/>
</dbReference>
<dbReference type="ProteomicsDB" id="218395"/>
<dbReference type="EnsemblPlants" id="AT1G61210.1">
    <molecule id="F4HTH8-1"/>
    <property type="protein sequence ID" value="AT1G61210.1"/>
    <property type="gene ID" value="AT1G61210"/>
</dbReference>
<dbReference type="EnsemblPlants" id="AT1G61210.2">
    <molecule id="F4HTH8-2"/>
    <property type="protein sequence ID" value="AT1G61210.2"/>
    <property type="gene ID" value="AT1G61210"/>
</dbReference>
<dbReference type="EnsemblPlants" id="AT1G61210.3">
    <molecule id="F4HTH8-3"/>
    <property type="protein sequence ID" value="AT1G61210.3"/>
    <property type="gene ID" value="AT1G61210"/>
</dbReference>
<dbReference type="GeneID" id="842414"/>
<dbReference type="Gramene" id="AT1G61210.1">
    <molecule id="F4HTH8-1"/>
    <property type="protein sequence ID" value="AT1G61210.1"/>
    <property type="gene ID" value="AT1G61210"/>
</dbReference>
<dbReference type="Gramene" id="AT1G61210.2">
    <molecule id="F4HTH8-2"/>
    <property type="protein sequence ID" value="AT1G61210.2"/>
    <property type="gene ID" value="AT1G61210"/>
</dbReference>
<dbReference type="Gramene" id="AT1G61210.3">
    <molecule id="F4HTH8-3"/>
    <property type="protein sequence ID" value="AT1G61210.3"/>
    <property type="gene ID" value="AT1G61210"/>
</dbReference>
<dbReference type="KEGG" id="ath:AT1G61210"/>
<dbReference type="Araport" id="AT1G61210"/>
<dbReference type="TAIR" id="AT1G61210">
    <property type="gene designation" value="DWA3"/>
</dbReference>
<dbReference type="eggNOG" id="KOG0267">
    <property type="taxonomic scope" value="Eukaryota"/>
</dbReference>
<dbReference type="HOGENOM" id="CLU_007811_1_0_1"/>
<dbReference type="InParanoid" id="F4HTH8"/>
<dbReference type="OMA" id="HYWERND"/>
<dbReference type="PRO" id="PR:F4HTH8"/>
<dbReference type="Proteomes" id="UP000006548">
    <property type="component" value="Chromosome 1"/>
</dbReference>
<dbReference type="ExpressionAtlas" id="F4HTH8">
    <property type="expression patterns" value="baseline and differential"/>
</dbReference>
<dbReference type="GO" id="GO:0080008">
    <property type="term" value="C:Cul4-RING E3 ubiquitin ligase complex"/>
    <property type="evidence" value="ECO:0000250"/>
    <property type="project" value="TAIR"/>
</dbReference>
<dbReference type="GO" id="GO:0005737">
    <property type="term" value="C:cytoplasm"/>
    <property type="evidence" value="ECO:0007669"/>
    <property type="project" value="UniProtKB-UniRule"/>
</dbReference>
<dbReference type="GO" id="GO:0008352">
    <property type="term" value="C:katanin complex"/>
    <property type="evidence" value="ECO:0007669"/>
    <property type="project" value="InterPro"/>
</dbReference>
<dbReference type="GO" id="GO:0005874">
    <property type="term" value="C:microtubule"/>
    <property type="evidence" value="ECO:0007669"/>
    <property type="project" value="UniProtKB-KW"/>
</dbReference>
<dbReference type="GO" id="GO:0015630">
    <property type="term" value="C:microtubule cytoskeleton"/>
    <property type="evidence" value="ECO:0000314"/>
    <property type="project" value="UniProtKB"/>
</dbReference>
<dbReference type="GO" id="GO:0008017">
    <property type="term" value="F:microtubule binding"/>
    <property type="evidence" value="ECO:0007669"/>
    <property type="project" value="UniProtKB-UniRule"/>
</dbReference>
<dbReference type="GO" id="GO:0051013">
    <property type="term" value="P:microtubule severing"/>
    <property type="evidence" value="ECO:0000315"/>
    <property type="project" value="UniProtKB"/>
</dbReference>
<dbReference type="GO" id="GO:0051510">
    <property type="term" value="P:regulation of unidimensional cell growth"/>
    <property type="evidence" value="ECO:0000315"/>
    <property type="project" value="UniProtKB"/>
</dbReference>
<dbReference type="GO" id="GO:0009737">
    <property type="term" value="P:response to abscisic acid"/>
    <property type="evidence" value="ECO:0000315"/>
    <property type="project" value="TAIR"/>
</dbReference>
<dbReference type="GO" id="GO:0009651">
    <property type="term" value="P:response to salt stress"/>
    <property type="evidence" value="ECO:0000315"/>
    <property type="project" value="TAIR"/>
</dbReference>
<dbReference type="CDD" id="cd00200">
    <property type="entry name" value="WD40"/>
    <property type="match status" value="1"/>
</dbReference>
<dbReference type="FunFam" id="2.130.10.10:FF:000183">
    <property type="entry name" value="Katanin p80 WD40 repeat-containing subunit B1"/>
    <property type="match status" value="1"/>
</dbReference>
<dbReference type="FunFam" id="2.130.10.10:FF:000897">
    <property type="entry name" value="Katanin p80 WD40 repeat-containing subunit B1 homolog"/>
    <property type="match status" value="1"/>
</dbReference>
<dbReference type="Gene3D" id="2.130.10.10">
    <property type="entry name" value="YVTN repeat-like/Quinoprotein amine dehydrogenase"/>
    <property type="match status" value="2"/>
</dbReference>
<dbReference type="HAMAP" id="MF_03022">
    <property type="entry name" value="Katanin_p80_B1"/>
    <property type="match status" value="1"/>
</dbReference>
<dbReference type="InterPro" id="IPR020472">
    <property type="entry name" value="G-protein_beta_WD-40_rep"/>
</dbReference>
<dbReference type="InterPro" id="IPR028021">
    <property type="entry name" value="Katanin_C-terminal"/>
</dbReference>
<dbReference type="InterPro" id="IPR026962">
    <property type="entry name" value="KTNB1"/>
</dbReference>
<dbReference type="InterPro" id="IPR015943">
    <property type="entry name" value="WD40/YVTN_repeat-like_dom_sf"/>
</dbReference>
<dbReference type="InterPro" id="IPR019775">
    <property type="entry name" value="WD40_repeat_CS"/>
</dbReference>
<dbReference type="InterPro" id="IPR036322">
    <property type="entry name" value="WD40_repeat_dom_sf"/>
</dbReference>
<dbReference type="InterPro" id="IPR001680">
    <property type="entry name" value="WD40_rpt"/>
</dbReference>
<dbReference type="PANTHER" id="PTHR19845">
    <property type="entry name" value="KATANIN P80 SUBUNIT"/>
    <property type="match status" value="1"/>
</dbReference>
<dbReference type="PANTHER" id="PTHR19845:SF15">
    <property type="entry name" value="KATANIN P80 WD40 REPEAT-CONTAINING SUBUNIT B1 HOMOLOG KTN80.2"/>
    <property type="match status" value="1"/>
</dbReference>
<dbReference type="Pfam" id="PF13925">
    <property type="entry name" value="Katanin_con80"/>
    <property type="match status" value="1"/>
</dbReference>
<dbReference type="Pfam" id="PF00400">
    <property type="entry name" value="WD40"/>
    <property type="match status" value="6"/>
</dbReference>
<dbReference type="PRINTS" id="PR00320">
    <property type="entry name" value="GPROTEINBRPT"/>
</dbReference>
<dbReference type="SMART" id="SM00320">
    <property type="entry name" value="WD40"/>
    <property type="match status" value="6"/>
</dbReference>
<dbReference type="SUPFAM" id="SSF50978">
    <property type="entry name" value="WD40 repeat-like"/>
    <property type="match status" value="1"/>
</dbReference>
<dbReference type="PROSITE" id="PS00678">
    <property type="entry name" value="WD_REPEATS_1"/>
    <property type="match status" value="3"/>
</dbReference>
<dbReference type="PROSITE" id="PS50082">
    <property type="entry name" value="WD_REPEATS_2"/>
    <property type="match status" value="5"/>
</dbReference>
<dbReference type="PROSITE" id="PS50294">
    <property type="entry name" value="WD_REPEATS_REGION"/>
    <property type="match status" value="1"/>
</dbReference>
<evidence type="ECO:0000255" key="1"/>
<evidence type="ECO:0000255" key="2">
    <source>
        <dbReference type="HAMAP-Rule" id="MF_03022"/>
    </source>
</evidence>
<evidence type="ECO:0000256" key="3">
    <source>
        <dbReference type="SAM" id="MobiDB-lite"/>
    </source>
</evidence>
<evidence type="ECO:0000269" key="4">
    <source>
    </source>
</evidence>
<evidence type="ECO:0000269" key="5">
    <source>
    </source>
</evidence>
<evidence type="ECO:0000303" key="6">
    <source>
    </source>
</evidence>
<evidence type="ECO:0000303" key="7">
    <source>
    </source>
</evidence>
<evidence type="ECO:0000305" key="8"/>
<evidence type="ECO:0000305" key="9">
    <source>
    </source>
</evidence>
<evidence type="ECO:0000312" key="10">
    <source>
        <dbReference type="Araport" id="AT1G61210"/>
    </source>
</evidence>
<evidence type="ECO:0000312" key="11">
    <source>
        <dbReference type="EMBL" id="AAB71474.1"/>
    </source>
</evidence>
<proteinExistence type="evidence at protein level"/>
<feature type="chain" id="PRO_0000450714" description="Katanin p80 WD40 repeat-containing subunit B1 homolog KTN80.2">
    <location>
        <begin position="1"/>
        <end position="1181"/>
    </location>
</feature>
<feature type="repeat" description="WD 1" evidence="2">
    <location>
        <begin position="13"/>
        <end position="53"/>
    </location>
</feature>
<feature type="repeat" description="WD 2" evidence="2">
    <location>
        <begin position="56"/>
        <end position="95"/>
    </location>
</feature>
<feature type="repeat" description="WD 3" evidence="2">
    <location>
        <begin position="98"/>
        <end position="137"/>
    </location>
</feature>
<feature type="repeat" description="WD 4" evidence="2">
    <location>
        <begin position="140"/>
        <end position="181"/>
    </location>
</feature>
<feature type="repeat" description="WD 5" evidence="2">
    <location>
        <begin position="183"/>
        <end position="221"/>
    </location>
</feature>
<feature type="repeat" description="WD 6" evidence="2">
    <location>
        <begin position="224"/>
        <end position="264"/>
    </location>
</feature>
<feature type="repeat" description="WD 7" evidence="1">
    <location>
        <begin position="266"/>
        <end position="303"/>
    </location>
</feature>
<feature type="region of interest" description="Disordered" evidence="3">
    <location>
        <begin position="361"/>
        <end position="383"/>
    </location>
</feature>
<feature type="region of interest" description="Disordered" evidence="3">
    <location>
        <begin position="503"/>
        <end position="597"/>
    </location>
</feature>
<feature type="region of interest" description="Disordered" evidence="3">
    <location>
        <begin position="702"/>
        <end position="739"/>
    </location>
</feature>
<feature type="region of interest" description="Disordered" evidence="3">
    <location>
        <begin position="754"/>
        <end position="869"/>
    </location>
</feature>
<feature type="region of interest" description="Disordered" evidence="3">
    <location>
        <begin position="988"/>
        <end position="1008"/>
    </location>
</feature>
<feature type="short sequence motif" description="DWD box" evidence="9">
    <location>
        <begin position="114"/>
        <end position="130"/>
    </location>
</feature>
<feature type="compositionally biased region" description="Polar residues" evidence="3">
    <location>
        <begin position="365"/>
        <end position="379"/>
    </location>
</feature>
<feature type="compositionally biased region" description="Polar residues" evidence="3">
    <location>
        <begin position="509"/>
        <end position="526"/>
    </location>
</feature>
<feature type="compositionally biased region" description="Basic and acidic residues" evidence="3">
    <location>
        <begin position="530"/>
        <end position="553"/>
    </location>
</feature>
<feature type="compositionally biased region" description="Basic and acidic residues" evidence="3">
    <location>
        <begin position="569"/>
        <end position="585"/>
    </location>
</feature>
<feature type="compositionally biased region" description="Polar residues" evidence="3">
    <location>
        <begin position="703"/>
        <end position="739"/>
    </location>
</feature>
<feature type="compositionally biased region" description="Polar residues" evidence="3">
    <location>
        <begin position="754"/>
        <end position="791"/>
    </location>
</feature>
<feature type="compositionally biased region" description="Polar residues" evidence="3">
    <location>
        <begin position="822"/>
        <end position="841"/>
    </location>
</feature>
<feature type="compositionally biased region" description="Polar residues" evidence="3">
    <location>
        <begin position="850"/>
        <end position="859"/>
    </location>
</feature>
<feature type="compositionally biased region" description="Basic and acidic residues" evidence="3">
    <location>
        <begin position="998"/>
        <end position="1008"/>
    </location>
</feature>
<feature type="splice variant" id="VSP_060684" description="In isoform 2 and isoform 3.">
    <original>STG</original>
    <variation>C</variation>
    <location>
        <begin position="353"/>
        <end position="355"/>
    </location>
</feature>
<feature type="splice variant" id="VSP_060685" description="In isoform 3.">
    <location>
        <begin position="720"/>
        <end position="821"/>
    </location>
</feature>
<keyword id="KW-0025">Alternative splicing</keyword>
<keyword id="KW-0963">Cytoplasm</keyword>
<keyword id="KW-0206">Cytoskeleton</keyword>
<keyword id="KW-0493">Microtubule</keyword>
<keyword id="KW-1185">Reference proteome</keyword>
<keyword id="KW-0677">Repeat</keyword>
<keyword id="KW-0853">WD repeat</keyword>